<keyword id="KW-0067">ATP-binding</keyword>
<keyword id="KW-0997">Cell inner membrane</keyword>
<keyword id="KW-1003">Cell membrane</keyword>
<keyword id="KW-0963">Cytoplasm</keyword>
<keyword id="KW-0472">Membrane</keyword>
<keyword id="KW-0479">Metal-binding</keyword>
<keyword id="KW-0547">Nucleotide-binding</keyword>
<keyword id="KW-0653">Protein transport</keyword>
<keyword id="KW-1185">Reference proteome</keyword>
<keyword id="KW-1278">Translocase</keyword>
<keyword id="KW-0811">Translocation</keyword>
<keyword id="KW-0813">Transport</keyword>
<keyword id="KW-0862">Zinc</keyword>
<gene>
    <name evidence="1" type="primary">secA</name>
    <name type="ordered locus">E2348C_0103</name>
</gene>
<feature type="chain" id="PRO_1000184227" description="Protein translocase subunit SecA">
    <location>
        <begin position="1"/>
        <end position="901"/>
    </location>
</feature>
<feature type="region of interest" description="Disordered" evidence="2">
    <location>
        <begin position="859"/>
        <end position="901"/>
    </location>
</feature>
<feature type="compositionally biased region" description="Basic residues" evidence="2">
    <location>
        <begin position="891"/>
        <end position="901"/>
    </location>
</feature>
<feature type="binding site" evidence="1">
    <location>
        <position position="87"/>
    </location>
    <ligand>
        <name>ATP</name>
        <dbReference type="ChEBI" id="CHEBI:30616"/>
    </ligand>
</feature>
<feature type="binding site" evidence="1">
    <location>
        <begin position="105"/>
        <end position="109"/>
    </location>
    <ligand>
        <name>ATP</name>
        <dbReference type="ChEBI" id="CHEBI:30616"/>
    </ligand>
</feature>
<feature type="binding site" evidence="1">
    <location>
        <position position="512"/>
    </location>
    <ligand>
        <name>ATP</name>
        <dbReference type="ChEBI" id="CHEBI:30616"/>
    </ligand>
</feature>
<feature type="binding site" evidence="1">
    <location>
        <position position="885"/>
    </location>
    <ligand>
        <name>Zn(2+)</name>
        <dbReference type="ChEBI" id="CHEBI:29105"/>
    </ligand>
</feature>
<feature type="binding site" evidence="1">
    <location>
        <position position="887"/>
    </location>
    <ligand>
        <name>Zn(2+)</name>
        <dbReference type="ChEBI" id="CHEBI:29105"/>
    </ligand>
</feature>
<feature type="binding site" evidence="1">
    <location>
        <position position="896"/>
    </location>
    <ligand>
        <name>Zn(2+)</name>
        <dbReference type="ChEBI" id="CHEBI:29105"/>
    </ligand>
</feature>
<feature type="binding site" evidence="1">
    <location>
        <position position="897"/>
    </location>
    <ligand>
        <name>Zn(2+)</name>
        <dbReference type="ChEBI" id="CHEBI:29105"/>
    </ligand>
</feature>
<organism>
    <name type="scientific">Escherichia coli O127:H6 (strain E2348/69 / EPEC)</name>
    <dbReference type="NCBI Taxonomy" id="574521"/>
    <lineage>
        <taxon>Bacteria</taxon>
        <taxon>Pseudomonadati</taxon>
        <taxon>Pseudomonadota</taxon>
        <taxon>Gammaproteobacteria</taxon>
        <taxon>Enterobacterales</taxon>
        <taxon>Enterobacteriaceae</taxon>
        <taxon>Escherichia</taxon>
    </lineage>
</organism>
<evidence type="ECO:0000255" key="1">
    <source>
        <dbReference type="HAMAP-Rule" id="MF_01382"/>
    </source>
</evidence>
<evidence type="ECO:0000256" key="2">
    <source>
        <dbReference type="SAM" id="MobiDB-lite"/>
    </source>
</evidence>
<reference key="1">
    <citation type="journal article" date="2009" name="J. Bacteriol.">
        <title>Complete genome sequence and comparative genome analysis of enteropathogenic Escherichia coli O127:H6 strain E2348/69.</title>
        <authorList>
            <person name="Iguchi A."/>
            <person name="Thomson N.R."/>
            <person name="Ogura Y."/>
            <person name="Saunders D."/>
            <person name="Ooka T."/>
            <person name="Henderson I.R."/>
            <person name="Harris D."/>
            <person name="Asadulghani M."/>
            <person name="Kurokawa K."/>
            <person name="Dean P."/>
            <person name="Kenny B."/>
            <person name="Quail M.A."/>
            <person name="Thurston S."/>
            <person name="Dougan G."/>
            <person name="Hayashi T."/>
            <person name="Parkhill J."/>
            <person name="Frankel G."/>
        </authorList>
    </citation>
    <scope>NUCLEOTIDE SEQUENCE [LARGE SCALE GENOMIC DNA]</scope>
    <source>
        <strain>E2348/69 / EPEC</strain>
    </source>
</reference>
<dbReference type="EC" id="7.4.2.8" evidence="1"/>
<dbReference type="EMBL" id="FM180568">
    <property type="protein sequence ID" value="CAS07651.1"/>
    <property type="molecule type" value="Genomic_DNA"/>
</dbReference>
<dbReference type="RefSeq" id="WP_000905766.1">
    <property type="nucleotide sequence ID" value="NC_011601.1"/>
</dbReference>
<dbReference type="SMR" id="B7UIE8"/>
<dbReference type="KEGG" id="ecg:E2348C_0103"/>
<dbReference type="HOGENOM" id="CLU_005314_3_0_6"/>
<dbReference type="Proteomes" id="UP000008205">
    <property type="component" value="Chromosome"/>
</dbReference>
<dbReference type="GO" id="GO:0031522">
    <property type="term" value="C:cell envelope Sec protein transport complex"/>
    <property type="evidence" value="ECO:0007669"/>
    <property type="project" value="TreeGrafter"/>
</dbReference>
<dbReference type="GO" id="GO:0005829">
    <property type="term" value="C:cytosol"/>
    <property type="evidence" value="ECO:0007669"/>
    <property type="project" value="TreeGrafter"/>
</dbReference>
<dbReference type="GO" id="GO:0005886">
    <property type="term" value="C:plasma membrane"/>
    <property type="evidence" value="ECO:0007669"/>
    <property type="project" value="UniProtKB-SubCell"/>
</dbReference>
<dbReference type="GO" id="GO:0005524">
    <property type="term" value="F:ATP binding"/>
    <property type="evidence" value="ECO:0007669"/>
    <property type="project" value="UniProtKB-UniRule"/>
</dbReference>
<dbReference type="GO" id="GO:0046872">
    <property type="term" value="F:metal ion binding"/>
    <property type="evidence" value="ECO:0007669"/>
    <property type="project" value="UniProtKB-KW"/>
</dbReference>
<dbReference type="GO" id="GO:0008564">
    <property type="term" value="F:protein-exporting ATPase activity"/>
    <property type="evidence" value="ECO:0007669"/>
    <property type="project" value="UniProtKB-EC"/>
</dbReference>
<dbReference type="GO" id="GO:0065002">
    <property type="term" value="P:intracellular protein transmembrane transport"/>
    <property type="evidence" value="ECO:0007669"/>
    <property type="project" value="UniProtKB-UniRule"/>
</dbReference>
<dbReference type="GO" id="GO:0017038">
    <property type="term" value="P:protein import"/>
    <property type="evidence" value="ECO:0007669"/>
    <property type="project" value="InterPro"/>
</dbReference>
<dbReference type="GO" id="GO:0006605">
    <property type="term" value="P:protein targeting"/>
    <property type="evidence" value="ECO:0007669"/>
    <property type="project" value="UniProtKB-UniRule"/>
</dbReference>
<dbReference type="GO" id="GO:0043952">
    <property type="term" value="P:protein transport by the Sec complex"/>
    <property type="evidence" value="ECO:0007669"/>
    <property type="project" value="TreeGrafter"/>
</dbReference>
<dbReference type="CDD" id="cd17928">
    <property type="entry name" value="DEXDc_SecA"/>
    <property type="match status" value="1"/>
</dbReference>
<dbReference type="CDD" id="cd18803">
    <property type="entry name" value="SF2_C_secA"/>
    <property type="match status" value="1"/>
</dbReference>
<dbReference type="FunFam" id="1.10.3060.10:FF:000001">
    <property type="entry name" value="Preprotein translocase subunit SecA"/>
    <property type="match status" value="1"/>
</dbReference>
<dbReference type="FunFam" id="3.40.50.300:FF:000081">
    <property type="entry name" value="Preprotein translocase subunit SecA"/>
    <property type="match status" value="1"/>
</dbReference>
<dbReference type="FunFam" id="3.40.50.300:FF:000113">
    <property type="entry name" value="Preprotein translocase subunit SecA"/>
    <property type="match status" value="1"/>
</dbReference>
<dbReference type="FunFam" id="3.90.1440.10:FF:000001">
    <property type="entry name" value="Preprotein translocase subunit SecA"/>
    <property type="match status" value="1"/>
</dbReference>
<dbReference type="Gene3D" id="1.10.3060.10">
    <property type="entry name" value="Helical scaffold and wing domains of SecA"/>
    <property type="match status" value="1"/>
</dbReference>
<dbReference type="Gene3D" id="3.40.50.300">
    <property type="entry name" value="P-loop containing nucleotide triphosphate hydrolases"/>
    <property type="match status" value="2"/>
</dbReference>
<dbReference type="Gene3D" id="3.90.1440.10">
    <property type="entry name" value="SecA, preprotein cross-linking domain"/>
    <property type="match status" value="1"/>
</dbReference>
<dbReference type="HAMAP" id="MF_01382">
    <property type="entry name" value="SecA"/>
    <property type="match status" value="1"/>
</dbReference>
<dbReference type="InterPro" id="IPR014001">
    <property type="entry name" value="Helicase_ATP-bd"/>
</dbReference>
<dbReference type="InterPro" id="IPR001650">
    <property type="entry name" value="Helicase_C-like"/>
</dbReference>
<dbReference type="InterPro" id="IPR027417">
    <property type="entry name" value="P-loop_NTPase"/>
</dbReference>
<dbReference type="InterPro" id="IPR004027">
    <property type="entry name" value="SEC_C_motif"/>
</dbReference>
<dbReference type="InterPro" id="IPR000185">
    <property type="entry name" value="SecA"/>
</dbReference>
<dbReference type="InterPro" id="IPR020937">
    <property type="entry name" value="SecA_CS"/>
</dbReference>
<dbReference type="InterPro" id="IPR011115">
    <property type="entry name" value="SecA_DEAD"/>
</dbReference>
<dbReference type="InterPro" id="IPR014018">
    <property type="entry name" value="SecA_motor_DEAD"/>
</dbReference>
<dbReference type="InterPro" id="IPR011130">
    <property type="entry name" value="SecA_preprotein_X-link_dom"/>
</dbReference>
<dbReference type="InterPro" id="IPR044722">
    <property type="entry name" value="SecA_SF2_C"/>
</dbReference>
<dbReference type="InterPro" id="IPR011116">
    <property type="entry name" value="SecA_Wing/Scaffold"/>
</dbReference>
<dbReference type="InterPro" id="IPR036266">
    <property type="entry name" value="SecA_Wing/Scaffold_sf"/>
</dbReference>
<dbReference type="InterPro" id="IPR036670">
    <property type="entry name" value="SecA_X-link_sf"/>
</dbReference>
<dbReference type="NCBIfam" id="NF009538">
    <property type="entry name" value="PRK12904.1"/>
    <property type="match status" value="1"/>
</dbReference>
<dbReference type="NCBIfam" id="TIGR00963">
    <property type="entry name" value="secA"/>
    <property type="match status" value="1"/>
</dbReference>
<dbReference type="PANTHER" id="PTHR30612:SF0">
    <property type="entry name" value="CHLOROPLAST PROTEIN-TRANSPORTING ATPASE"/>
    <property type="match status" value="1"/>
</dbReference>
<dbReference type="PANTHER" id="PTHR30612">
    <property type="entry name" value="SECA INNER MEMBRANE COMPONENT OF SEC PROTEIN SECRETION SYSTEM"/>
    <property type="match status" value="1"/>
</dbReference>
<dbReference type="Pfam" id="PF21090">
    <property type="entry name" value="P-loop_SecA"/>
    <property type="match status" value="1"/>
</dbReference>
<dbReference type="Pfam" id="PF02810">
    <property type="entry name" value="SEC-C"/>
    <property type="match status" value="1"/>
</dbReference>
<dbReference type="Pfam" id="PF07517">
    <property type="entry name" value="SecA_DEAD"/>
    <property type="match status" value="1"/>
</dbReference>
<dbReference type="Pfam" id="PF01043">
    <property type="entry name" value="SecA_PP_bind"/>
    <property type="match status" value="1"/>
</dbReference>
<dbReference type="Pfam" id="PF07516">
    <property type="entry name" value="SecA_SW"/>
    <property type="match status" value="1"/>
</dbReference>
<dbReference type="PRINTS" id="PR00906">
    <property type="entry name" value="SECA"/>
</dbReference>
<dbReference type="SMART" id="SM00957">
    <property type="entry name" value="SecA_DEAD"/>
    <property type="match status" value="1"/>
</dbReference>
<dbReference type="SMART" id="SM00958">
    <property type="entry name" value="SecA_PP_bind"/>
    <property type="match status" value="1"/>
</dbReference>
<dbReference type="SUPFAM" id="SSF81886">
    <property type="entry name" value="Helical scaffold and wing domains of SecA"/>
    <property type="match status" value="1"/>
</dbReference>
<dbReference type="SUPFAM" id="SSF52540">
    <property type="entry name" value="P-loop containing nucleoside triphosphate hydrolases"/>
    <property type="match status" value="2"/>
</dbReference>
<dbReference type="SUPFAM" id="SSF81767">
    <property type="entry name" value="Pre-protein crosslinking domain of SecA"/>
    <property type="match status" value="1"/>
</dbReference>
<dbReference type="PROSITE" id="PS01312">
    <property type="entry name" value="SECA"/>
    <property type="match status" value="1"/>
</dbReference>
<dbReference type="PROSITE" id="PS51196">
    <property type="entry name" value="SECA_MOTOR_DEAD"/>
    <property type="match status" value="1"/>
</dbReference>
<comment type="function">
    <text evidence="1">Part of the Sec protein translocase complex. Interacts with the SecYEG preprotein conducting channel. Has a central role in coupling the hydrolysis of ATP to the transfer of proteins into and across the cell membrane, serving both as a receptor for the preprotein-SecB complex and as an ATP-driven molecular motor driving the stepwise translocation of polypeptide chains across the membrane.</text>
</comment>
<comment type="catalytic activity">
    <reaction evidence="1">
        <text>ATP + H2O + cellular proteinSide 1 = ADP + phosphate + cellular proteinSide 2.</text>
        <dbReference type="EC" id="7.4.2.8"/>
    </reaction>
</comment>
<comment type="cofactor">
    <cofactor evidence="1">
        <name>Zn(2+)</name>
        <dbReference type="ChEBI" id="CHEBI:29105"/>
    </cofactor>
    <text evidence="1">May bind 1 zinc ion per subunit.</text>
</comment>
<comment type="subunit">
    <text evidence="1">Monomer and homodimer. Part of the essential Sec protein translocation apparatus which comprises SecA, SecYEG and auxiliary proteins SecDF-YajC and YidC.</text>
</comment>
<comment type="subcellular location">
    <subcellularLocation>
        <location evidence="1">Cell inner membrane</location>
        <topology evidence="1">Peripheral membrane protein</topology>
        <orientation evidence="1">Cytoplasmic side</orientation>
    </subcellularLocation>
    <subcellularLocation>
        <location evidence="1">Cytoplasm</location>
    </subcellularLocation>
    <text evidence="1">Distribution is 50-50.</text>
</comment>
<comment type="induction">
    <text evidence="1">Repressed under conditions of excess protein secretion capacity and derepressed when protein secretion becomes limiting. This is regulated by SecM.</text>
</comment>
<comment type="similarity">
    <text evidence="1">Belongs to the SecA family.</text>
</comment>
<accession>B7UIE8</accession>
<proteinExistence type="inferred from homology"/>
<protein>
    <recommendedName>
        <fullName evidence="1">Protein translocase subunit SecA</fullName>
        <ecNumber evidence="1">7.4.2.8</ecNumber>
    </recommendedName>
</protein>
<name>SECA_ECO27</name>
<sequence>MLIKLLTKVFGSRNDRTLRRMRKVVNIINAMEPEIEKLSDEELKGKTAEFRARLEKGEVLENLIPEAFAVVREASKRVFGMRHFDVQLLGGMVLNERCIAEMRTGEGKTLTATLPAYLNALTGKGVHVVTVNDYLAQRDAENNRPLFEFLGLTVGINLPGMPAPAKREAYAADITYGTNNEYGFDYLRDNMAFSPEERVQRKLHYALVDEVDSILIDEARTPLIISGPAEDSSEMYKRVNKIIPHLIRQEKEDSETFQGEGHFSVDEKSRQVNLTERGLVLIEELLVKEGIMDEGESLYSPANIMLMHHVTAALRAHALFTRDVDYIVKDGEVIIVDEHTGRTMQGRRWSDGLHQAVEAKEGVQIQNENQTLASITFQNYFRLYEKLAGMTGTADTEAFEFSSIYKLDTVVVPTNRPMIRKDLPDLVYMTEAEKIQAIIEDIKERTAKGQPVLVGTISIEKSELVSNELTKAGIKHNVLNAKFHANEAAIVAQAGYPAAVTIATNMAGRGTDIVLGGSWQAEVAALENPTAEQIEKIKADWQVRHDAVLAAGGLHIIGTERHESRRIDNQLRGRSGRQGDAGSSRFYLSMEDALMRIFASDRVSGMMRKLGMKPGEAIEHPWVTKAIANAQRKVESRNFDIRKQLLEYDDVANDQRRAIYSQRNELLDVSDVSETINSIREDVFKATIDAYIPPQSLEEMWDIPGLQERLKNDFDLDLPIAEWLDKEPELHEETLRERILAQSIEVYQRKEEVVGAEMMRHFEKGVMLQTLDSLWKEHLAAMDYLRQGIHLRGYAQKDPKQEYKRESFSMFAAMLESLKYEVISTLSKVQVRMPEEVEELEQQRRMEAERLAQMQQLSHQDDDSAAAAALAAQTGERKVGRNDPCPCGSGKKYKQCHGRLQ</sequence>